<geneLocation type="plasmid">
    <name>pMG101</name>
</geneLocation>
<protein>
    <recommendedName>
        <fullName>Putative cation efflux system protein SilA</fullName>
    </recommendedName>
</protein>
<sequence length="1048" mass="114604">MIEWIIRRSVANRFLVMMGALFLSIWGTWTIINTPVDALPDLSDVQVIIKTSYPGQAPQIVENQVTYPLTTTMLSVPGAKTVRGFSQFGDSYVYVIFEDGTDLYWARSRVLEYLNQVQGKLPAGVSSEIGPDATGVGWIFEYALVDRSGKHDLSELRSLQDWFLKFELKTIPNVAEVASVGGVVKQYQIQVNPVKLSQYGISLPEVKQALESSNQEAGGSSVEIAEAEYMVRASGYLQSIDDFNNIVLKTGENGVPVYLRDVARVQTGPEMRRGIAELNGQGEVAGGVVILRSGKNARDVITAVRDKLETLKASLPEGVEIVTTYDRSQLIDRAIDNLSSKLLEEFFVVAIVCALFLWHVRSALVAIISLPLGLCIAFIVMHFQGLNANIMSLGGIAIAVGAMVDAAIVMIENAHKRLEEWDHRHPGEQIDNVTRWKVITDASVEVGPALFISLLIITLSFIPIFTLEGQEGRLFGPLAFTKTYSMAGAAALAIIVIPILMGFWIRGKIPAETSNPLNRVLIKAYHPLLLRVLHWPKTTLLVAALSIFTVVWPLSQVGGEFLPKINEGDLLYMPSTLPGVSPAEAAALLQTTDKLIKSVPEVASVFGKTGKAETATDSAPLEMVETTIQLKPEDQWRPGMTIDKIIDELDRTVRLPGLANLWVPPIRNRIDMLSTGIKSPIGIKVSGTVLSDIDATAQSIEAVAKTVPGVVSVLAERLEGGRYIDIDINREKASRYGMTVGDVQLFVSSAIGGAMVGETVEGVARYPINIRYPQDYRNSPQALKQMPILTPMKQQITLGDVADINVVSGPTMLKTENARPASWIYVDARGRDMVSVVNDIKTAISEKVKLRPGTSVAFSGQFELLEHANKKLKLMVPMTVMIIFILLYLAFRRVDEALLILMSLPFALVGGIWFLYWQGFHMSVATGTGFIALAGVAAEFGVVMLMYLRHAIEAHPELSRKETFTPEGLDEALYHGAVLRVRPKAMTVAVIIAGLLPILWGTGAGSEVMSRIAAPMIGGMITAPLLSLFIIPAAYKLIWLRRHKKSVS</sequence>
<accession>Q9ZHC9</accession>
<evidence type="ECO:0000255" key="1"/>
<evidence type="ECO:0000305" key="2"/>
<dbReference type="EMBL" id="AF067954">
    <property type="protein sequence ID" value="AAD11749.1"/>
    <property type="molecule type" value="Genomic_DNA"/>
</dbReference>
<dbReference type="RefSeq" id="WP_002436621.1">
    <property type="nucleotide sequence ID" value="NZ_JAETZG010000001.1"/>
</dbReference>
<dbReference type="SMR" id="Q9ZHC9"/>
<dbReference type="TCDB" id="2.A.6.1.3">
    <property type="family name" value="the resistance-nodulation-cell division (rnd) superfamily"/>
</dbReference>
<dbReference type="GeneID" id="92830463"/>
<dbReference type="GO" id="GO:0005886">
    <property type="term" value="C:plasma membrane"/>
    <property type="evidence" value="ECO:0007669"/>
    <property type="project" value="UniProtKB-SubCell"/>
</dbReference>
<dbReference type="GO" id="GO:0015297">
    <property type="term" value="F:antiporter activity"/>
    <property type="evidence" value="ECO:0007669"/>
    <property type="project" value="UniProtKB-KW"/>
</dbReference>
<dbReference type="GO" id="GO:0008324">
    <property type="term" value="F:monoatomic cation transmembrane transporter activity"/>
    <property type="evidence" value="ECO:0007669"/>
    <property type="project" value="InterPro"/>
</dbReference>
<dbReference type="GO" id="GO:0042910">
    <property type="term" value="F:xenobiotic transmembrane transporter activity"/>
    <property type="evidence" value="ECO:0007669"/>
    <property type="project" value="TreeGrafter"/>
</dbReference>
<dbReference type="Gene3D" id="3.30.70.1430">
    <property type="entry name" value="Multidrug efflux transporter AcrB pore domain"/>
    <property type="match status" value="2"/>
</dbReference>
<dbReference type="Gene3D" id="3.30.70.1440">
    <property type="entry name" value="Multidrug efflux transporter AcrB pore domain"/>
    <property type="match status" value="1"/>
</dbReference>
<dbReference type="Gene3D" id="3.30.70.1320">
    <property type="entry name" value="Multidrug efflux transporter AcrB pore domain like"/>
    <property type="match status" value="1"/>
</dbReference>
<dbReference type="Gene3D" id="3.30.2090.10">
    <property type="entry name" value="Multidrug efflux transporter AcrB TolC docking domain, DN and DC subdomains"/>
    <property type="match status" value="2"/>
</dbReference>
<dbReference type="Gene3D" id="1.20.1640.10">
    <property type="entry name" value="Multidrug efflux transporter AcrB transmembrane domain"/>
    <property type="match status" value="2"/>
</dbReference>
<dbReference type="InterPro" id="IPR027463">
    <property type="entry name" value="AcrB_DN_DC_subdom"/>
</dbReference>
<dbReference type="InterPro" id="IPR001036">
    <property type="entry name" value="Acrflvin-R"/>
</dbReference>
<dbReference type="InterPro" id="IPR004763">
    <property type="entry name" value="CusA-like"/>
</dbReference>
<dbReference type="NCBIfam" id="TIGR00914">
    <property type="entry name" value="2A0601"/>
    <property type="match status" value="1"/>
</dbReference>
<dbReference type="PANTHER" id="PTHR32063">
    <property type="match status" value="1"/>
</dbReference>
<dbReference type="PANTHER" id="PTHR32063:SF19">
    <property type="entry name" value="CATION EFFLUX SYSTEM PROTEIN CUSA"/>
    <property type="match status" value="1"/>
</dbReference>
<dbReference type="Pfam" id="PF00873">
    <property type="entry name" value="ACR_tran"/>
    <property type="match status" value="1"/>
</dbReference>
<dbReference type="PRINTS" id="PR00702">
    <property type="entry name" value="ACRIFLAVINRP"/>
</dbReference>
<dbReference type="SUPFAM" id="SSF82693">
    <property type="entry name" value="Multidrug efflux transporter AcrB pore domain, PN1, PN2, PC1 and PC2 subdomains"/>
    <property type="match status" value="2"/>
</dbReference>
<dbReference type="SUPFAM" id="SSF82714">
    <property type="entry name" value="Multidrug efflux transporter AcrB TolC docking domain, DN and DC subdomains"/>
    <property type="match status" value="2"/>
</dbReference>
<dbReference type="SUPFAM" id="SSF82866">
    <property type="entry name" value="Multidrug efflux transporter AcrB transmembrane domain"/>
    <property type="match status" value="2"/>
</dbReference>
<organism>
    <name type="scientific">Salmonella typhimurium</name>
    <dbReference type="NCBI Taxonomy" id="90371"/>
    <lineage>
        <taxon>Bacteria</taxon>
        <taxon>Pseudomonadati</taxon>
        <taxon>Pseudomonadota</taxon>
        <taxon>Gammaproteobacteria</taxon>
        <taxon>Enterobacterales</taxon>
        <taxon>Enterobacteriaceae</taxon>
        <taxon>Salmonella</taxon>
    </lineage>
</organism>
<reference key="1">
    <citation type="journal article" date="1999" name="Nat. Med.">
        <title>Molecular basis for resistance to silver cations in Salmonella.</title>
        <authorList>
            <person name="Gupta A."/>
            <person name="Matsui K."/>
            <person name="Lo J.-F."/>
            <person name="Silver S."/>
        </authorList>
    </citation>
    <scope>NUCLEOTIDE SEQUENCE [GENOMIC DNA]</scope>
</reference>
<name>SILA_SALTM</name>
<feature type="chain" id="PRO_0000161846" description="Putative cation efflux system protein SilA">
    <location>
        <begin position="1"/>
        <end position="1048"/>
    </location>
</feature>
<feature type="transmembrane region" description="Helical" evidence="1">
    <location>
        <begin position="14"/>
        <end position="34"/>
    </location>
</feature>
<feature type="transmembrane region" description="Helical" evidence="1">
    <location>
        <begin position="125"/>
        <end position="145"/>
    </location>
</feature>
<feature type="transmembrane region" description="Helical" evidence="1">
    <location>
        <begin position="338"/>
        <end position="358"/>
    </location>
</feature>
<feature type="transmembrane region" description="Helical" evidence="1">
    <location>
        <begin position="363"/>
        <end position="383"/>
    </location>
</feature>
<feature type="transmembrane region" description="Helical" evidence="1">
    <location>
        <begin position="391"/>
        <end position="411"/>
    </location>
</feature>
<feature type="transmembrane region" description="Helical" evidence="1">
    <location>
        <begin position="446"/>
        <end position="466"/>
    </location>
</feature>
<feature type="transmembrane region" description="Helical" evidence="1">
    <location>
        <begin position="485"/>
        <end position="505"/>
    </location>
</feature>
<feature type="transmembrane region" description="Helical" evidence="1">
    <location>
        <begin position="539"/>
        <end position="559"/>
    </location>
</feature>
<feature type="transmembrane region" description="Helical" evidence="1">
    <location>
        <begin position="737"/>
        <end position="757"/>
    </location>
</feature>
<feature type="transmembrane region" description="Helical" evidence="1">
    <location>
        <begin position="871"/>
        <end position="891"/>
    </location>
</feature>
<feature type="transmembrane region" description="Helical" evidence="1">
    <location>
        <begin position="897"/>
        <end position="917"/>
    </location>
</feature>
<feature type="transmembrane region" description="Helical" evidence="1">
    <location>
        <begin position="928"/>
        <end position="948"/>
    </location>
</feature>
<feature type="transmembrane region" description="Helical" evidence="1">
    <location>
        <begin position="985"/>
        <end position="1005"/>
    </location>
</feature>
<feature type="transmembrane region" description="Helical" evidence="1">
    <location>
        <begin position="1012"/>
        <end position="1032"/>
    </location>
</feature>
<gene>
    <name type="primary">silA</name>
</gene>
<proteinExistence type="inferred from homology"/>
<keyword id="KW-0050">Antiport</keyword>
<keyword id="KW-0997">Cell inner membrane</keyword>
<keyword id="KW-1003">Cell membrane</keyword>
<keyword id="KW-0472">Membrane</keyword>
<keyword id="KW-0614">Plasmid</keyword>
<keyword id="KW-0812">Transmembrane</keyword>
<keyword id="KW-1133">Transmembrane helix</keyword>
<keyword id="KW-0813">Transport</keyword>
<comment type="function">
    <text>Component of the sil cation-efflux system that confers resistance to silver. May be part of a three-component cation/proton antiporter.</text>
</comment>
<comment type="subcellular location">
    <subcellularLocation>
        <location evidence="2">Cell inner membrane</location>
        <topology evidence="2">Multi-pass membrane protein</topology>
    </subcellularLocation>
</comment>
<comment type="similarity">
    <text evidence="2">Belongs to the resistance-nodulation-cell division (RND) (TC 2.A.6) family.</text>
</comment>